<evidence type="ECO:0000250" key="1"/>
<evidence type="ECO:0000255" key="2"/>
<evidence type="ECO:0000305" key="3"/>
<feature type="signal peptide" evidence="2">
    <location>
        <begin position="1"/>
        <end position="20"/>
    </location>
</feature>
<feature type="chain" id="PRO_0000355623" description="Non-specific lipid-transfer protein 13">
    <location>
        <begin position="21"/>
        <end position="126"/>
    </location>
</feature>
<feature type="disulfide bond" evidence="2">
    <location>
        <begin position="36"/>
        <end position="85"/>
    </location>
</feature>
<feature type="disulfide bond" evidence="2">
    <location>
        <begin position="46"/>
        <end position="61"/>
    </location>
</feature>
<feature type="disulfide bond" evidence="2">
    <location>
        <begin position="62"/>
        <end position="109"/>
    </location>
</feature>
<feature type="disulfide bond" evidence="2">
    <location>
        <begin position="83"/>
        <end position="123"/>
    </location>
</feature>
<reference key="1">
    <citation type="journal article" date="1998" name="DNA Res.">
        <title>Structural analysis of Arabidopsis thaliana chromosome 5. V. Sequence features of the regions of 1,381,565 bp covered by twenty one physically assigned P1 and TAC clones.</title>
        <authorList>
            <person name="Kaneko T."/>
            <person name="Kotani H."/>
            <person name="Nakamura Y."/>
            <person name="Sato S."/>
            <person name="Asamizu E."/>
            <person name="Miyajima N."/>
            <person name="Tabata S."/>
        </authorList>
    </citation>
    <scope>NUCLEOTIDE SEQUENCE [LARGE SCALE GENOMIC DNA]</scope>
    <source>
        <strain>cv. Columbia</strain>
    </source>
</reference>
<reference key="2">
    <citation type="journal article" date="2017" name="Plant J.">
        <title>Araport11: a complete reannotation of the Arabidopsis thaliana reference genome.</title>
        <authorList>
            <person name="Cheng C.Y."/>
            <person name="Krishnakumar V."/>
            <person name="Chan A.P."/>
            <person name="Thibaud-Nissen F."/>
            <person name="Schobel S."/>
            <person name="Town C.D."/>
        </authorList>
    </citation>
    <scope>GENOME REANNOTATION</scope>
    <source>
        <strain>cv. Columbia</strain>
    </source>
</reference>
<reference key="3">
    <citation type="journal article" date="2008" name="Plant Physiol. Biochem.">
        <title>Plant pathogenesis-related (PR) proteins: a focus on PR peptides.</title>
        <authorList>
            <person name="Sels J."/>
            <person name="Mathys J."/>
            <person name="De Coninck B.M.A."/>
            <person name="Cammue B.P.A."/>
            <person name="De Bolle M.F.C."/>
        </authorList>
    </citation>
    <scope>GENE FAMILY</scope>
    <scope>NOMENCLATURE</scope>
</reference>
<sequence>MDTHTTKLVAISLLLLLVISDYTRLMIQVHSYVPFCAYTYDYFSYCLDFLTGYYYKPGKKCCVHIVKLNIIAKHKKENPRLLCNCVEMMTRGYTPPMLADKIQQLPLLCNTHLSFPISSSMDCSTV</sequence>
<name>NLTPD_ARATH</name>
<gene>
    <name type="primary">LTP13</name>
    <name type="ordered locus">At5g44265</name>
    <name type="ORF">K9L2</name>
</gene>
<accession>A8MQA2</accession>
<comment type="function">
    <text evidence="1">Plant non-specific lipid-transfer proteins transfer phospholipids as well as galactolipids across membranes. May play a role in wax or cutin deposition in the cell walls of expanding epidermal cells and certain secretory tissues (By similarity).</text>
</comment>
<comment type="similarity">
    <text evidence="3">Belongs to the plant LTP family.</text>
</comment>
<dbReference type="EMBL" id="AB011475">
    <property type="status" value="NOT_ANNOTATED_CDS"/>
    <property type="molecule type" value="Genomic_DNA"/>
</dbReference>
<dbReference type="EMBL" id="CP002688">
    <property type="protein sequence ID" value="AED95083.1"/>
    <property type="molecule type" value="Genomic_DNA"/>
</dbReference>
<dbReference type="RefSeq" id="NP_001078707.1">
    <property type="nucleotide sequence ID" value="NM_001085238.1"/>
</dbReference>
<dbReference type="SMR" id="A8MQA2"/>
<dbReference type="PaxDb" id="3702-AT5G44265.1"/>
<dbReference type="ProteomicsDB" id="249123"/>
<dbReference type="EnsemblPlants" id="AT5G44265.1">
    <property type="protein sequence ID" value="AT5G44265.1"/>
    <property type="gene ID" value="AT5G44265"/>
</dbReference>
<dbReference type="GeneID" id="5008293"/>
<dbReference type="Gramene" id="AT5G44265.1">
    <property type="protein sequence ID" value="AT5G44265.1"/>
    <property type="gene ID" value="AT5G44265"/>
</dbReference>
<dbReference type="KEGG" id="ath:AT5G44265"/>
<dbReference type="Araport" id="AT5G44265"/>
<dbReference type="TAIR" id="AT5G44265"/>
<dbReference type="eggNOG" id="ENOG502S6VB">
    <property type="taxonomic scope" value="Eukaryota"/>
</dbReference>
<dbReference type="HOGENOM" id="CLU_128423_2_2_1"/>
<dbReference type="InParanoid" id="A8MQA2"/>
<dbReference type="OMA" id="HKKENPR"/>
<dbReference type="PhylomeDB" id="A8MQA2"/>
<dbReference type="PRO" id="PR:A8MQA2"/>
<dbReference type="Proteomes" id="UP000006548">
    <property type="component" value="Chromosome 5"/>
</dbReference>
<dbReference type="ExpressionAtlas" id="A8MQA2">
    <property type="expression patterns" value="baseline"/>
</dbReference>
<dbReference type="GO" id="GO:0008289">
    <property type="term" value="F:lipid binding"/>
    <property type="evidence" value="ECO:0007669"/>
    <property type="project" value="UniProtKB-KW"/>
</dbReference>
<dbReference type="GO" id="GO:0006869">
    <property type="term" value="P:lipid transport"/>
    <property type="evidence" value="ECO:0007669"/>
    <property type="project" value="InterPro"/>
</dbReference>
<dbReference type="Gene3D" id="1.10.110.10">
    <property type="entry name" value="Plant lipid-transfer and hydrophobic proteins"/>
    <property type="match status" value="1"/>
</dbReference>
<dbReference type="InterPro" id="IPR036312">
    <property type="entry name" value="Bifun_inhib/LTP/seed_sf"/>
</dbReference>
<dbReference type="InterPro" id="IPR000528">
    <property type="entry name" value="Plant_nsLTP"/>
</dbReference>
<dbReference type="PANTHER" id="PTHR33076">
    <property type="entry name" value="NON-SPECIFIC LIPID-TRANSFER PROTEIN 2-RELATED"/>
    <property type="match status" value="1"/>
</dbReference>
<dbReference type="SUPFAM" id="SSF47699">
    <property type="entry name" value="Bifunctional inhibitor/lipid-transfer protein/seed storage 2S albumin"/>
    <property type="match status" value="1"/>
</dbReference>
<proteinExistence type="evidence at transcript level"/>
<protein>
    <recommendedName>
        <fullName>Non-specific lipid-transfer protein 13</fullName>
        <shortName>LTP 13</shortName>
    </recommendedName>
</protein>
<organism>
    <name type="scientific">Arabidopsis thaliana</name>
    <name type="common">Mouse-ear cress</name>
    <dbReference type="NCBI Taxonomy" id="3702"/>
    <lineage>
        <taxon>Eukaryota</taxon>
        <taxon>Viridiplantae</taxon>
        <taxon>Streptophyta</taxon>
        <taxon>Embryophyta</taxon>
        <taxon>Tracheophyta</taxon>
        <taxon>Spermatophyta</taxon>
        <taxon>Magnoliopsida</taxon>
        <taxon>eudicotyledons</taxon>
        <taxon>Gunneridae</taxon>
        <taxon>Pentapetalae</taxon>
        <taxon>rosids</taxon>
        <taxon>malvids</taxon>
        <taxon>Brassicales</taxon>
        <taxon>Brassicaceae</taxon>
        <taxon>Camelineae</taxon>
        <taxon>Arabidopsis</taxon>
    </lineage>
</organism>
<keyword id="KW-1015">Disulfide bond</keyword>
<keyword id="KW-0446">Lipid-binding</keyword>
<keyword id="KW-1185">Reference proteome</keyword>
<keyword id="KW-0732">Signal</keyword>
<keyword id="KW-0813">Transport</keyword>